<comment type="function">
    <text evidence="1">Nucleotide-binding protein.</text>
</comment>
<comment type="similarity">
    <text evidence="1">Belongs to the YajQ family.</text>
</comment>
<dbReference type="EMBL" id="CP000444">
    <property type="protein sequence ID" value="ABI41810.1"/>
    <property type="molecule type" value="Genomic_DNA"/>
</dbReference>
<dbReference type="SMR" id="Q0HYJ5"/>
<dbReference type="KEGG" id="shm:Shewmr7_0811"/>
<dbReference type="HOGENOM" id="CLU_099839_1_0_6"/>
<dbReference type="GO" id="GO:0005829">
    <property type="term" value="C:cytosol"/>
    <property type="evidence" value="ECO:0007669"/>
    <property type="project" value="TreeGrafter"/>
</dbReference>
<dbReference type="GO" id="GO:0000166">
    <property type="term" value="F:nucleotide binding"/>
    <property type="evidence" value="ECO:0007669"/>
    <property type="project" value="TreeGrafter"/>
</dbReference>
<dbReference type="CDD" id="cd11740">
    <property type="entry name" value="YajQ_like"/>
    <property type="match status" value="1"/>
</dbReference>
<dbReference type="FunFam" id="3.30.70.860:FF:000001">
    <property type="entry name" value="UPF0234 protein YajQ"/>
    <property type="match status" value="1"/>
</dbReference>
<dbReference type="FunFam" id="3.30.70.990:FF:000001">
    <property type="entry name" value="UPF0234 protein YajQ"/>
    <property type="match status" value="1"/>
</dbReference>
<dbReference type="Gene3D" id="3.30.70.860">
    <property type="match status" value="1"/>
</dbReference>
<dbReference type="Gene3D" id="3.30.70.990">
    <property type="entry name" value="YajQ-like, domain 2"/>
    <property type="match status" value="1"/>
</dbReference>
<dbReference type="HAMAP" id="MF_00632">
    <property type="entry name" value="YajQ"/>
    <property type="match status" value="1"/>
</dbReference>
<dbReference type="InterPro" id="IPR007551">
    <property type="entry name" value="DUF520"/>
</dbReference>
<dbReference type="InterPro" id="IPR035571">
    <property type="entry name" value="UPF0234-like_C"/>
</dbReference>
<dbReference type="InterPro" id="IPR035570">
    <property type="entry name" value="UPF0234_N"/>
</dbReference>
<dbReference type="InterPro" id="IPR036183">
    <property type="entry name" value="YajQ-like_sf"/>
</dbReference>
<dbReference type="NCBIfam" id="NF003819">
    <property type="entry name" value="PRK05412.1"/>
    <property type="match status" value="1"/>
</dbReference>
<dbReference type="PANTHER" id="PTHR30476">
    <property type="entry name" value="UPF0234 PROTEIN YAJQ"/>
    <property type="match status" value="1"/>
</dbReference>
<dbReference type="PANTHER" id="PTHR30476:SF0">
    <property type="entry name" value="UPF0234 PROTEIN YAJQ"/>
    <property type="match status" value="1"/>
</dbReference>
<dbReference type="Pfam" id="PF04461">
    <property type="entry name" value="DUF520"/>
    <property type="match status" value="1"/>
</dbReference>
<dbReference type="SUPFAM" id="SSF89963">
    <property type="entry name" value="YajQ-like"/>
    <property type="match status" value="2"/>
</dbReference>
<name>Y811_SHESR</name>
<organism>
    <name type="scientific">Shewanella sp. (strain MR-7)</name>
    <dbReference type="NCBI Taxonomy" id="60481"/>
    <lineage>
        <taxon>Bacteria</taxon>
        <taxon>Pseudomonadati</taxon>
        <taxon>Pseudomonadota</taxon>
        <taxon>Gammaproteobacteria</taxon>
        <taxon>Alteromonadales</taxon>
        <taxon>Shewanellaceae</taxon>
        <taxon>Shewanella</taxon>
    </lineage>
</organism>
<protein>
    <recommendedName>
        <fullName evidence="1">Nucleotide-binding protein Shewmr7_0811</fullName>
    </recommendedName>
</protein>
<keyword id="KW-0547">Nucleotide-binding</keyword>
<accession>Q0HYJ5</accession>
<proteinExistence type="inferred from homology"/>
<reference key="1">
    <citation type="submission" date="2006-08" db="EMBL/GenBank/DDBJ databases">
        <title>Complete sequence of chromosome 1 of Shewanella sp. MR-7.</title>
        <authorList>
            <person name="Copeland A."/>
            <person name="Lucas S."/>
            <person name="Lapidus A."/>
            <person name="Barry K."/>
            <person name="Detter J.C."/>
            <person name="Glavina del Rio T."/>
            <person name="Hammon N."/>
            <person name="Israni S."/>
            <person name="Dalin E."/>
            <person name="Tice H."/>
            <person name="Pitluck S."/>
            <person name="Kiss H."/>
            <person name="Brettin T."/>
            <person name="Bruce D."/>
            <person name="Han C."/>
            <person name="Tapia R."/>
            <person name="Gilna P."/>
            <person name="Schmutz J."/>
            <person name="Larimer F."/>
            <person name="Land M."/>
            <person name="Hauser L."/>
            <person name="Kyrpides N."/>
            <person name="Mikhailova N."/>
            <person name="Nealson K."/>
            <person name="Konstantinidis K."/>
            <person name="Klappenbach J."/>
            <person name="Tiedje J."/>
            <person name="Richardson P."/>
        </authorList>
    </citation>
    <scope>NUCLEOTIDE SEQUENCE [LARGE SCALE GENOMIC DNA]</scope>
    <source>
        <strain>MR-7</strain>
    </source>
</reference>
<gene>
    <name type="ordered locus">Shewmr7_0811</name>
</gene>
<feature type="chain" id="PRO_0000261975" description="Nucleotide-binding protein Shewmr7_0811">
    <location>
        <begin position="1"/>
        <end position="161"/>
    </location>
</feature>
<evidence type="ECO:0000255" key="1">
    <source>
        <dbReference type="HAMAP-Rule" id="MF_00632"/>
    </source>
</evidence>
<sequence length="161" mass="18397">MPSFDIVSEVDEVELRNAVENSRRELSSRFDFRGKDASIEYKDHVVTLTAEDDFQCKQLVDILRTQLSKRNVEPSTMDVDEKSVHSGKTFSLKVRFKQGIETDIAKKIVKMVKDSKIKVQSQIQGDTVRVTGKARDDLQAVMALVRQADLGQPFQFNNFRD</sequence>